<accession>P52816</accession>
<name>RL23_ONCVO</name>
<evidence type="ECO:0000305" key="1"/>
<protein>
    <recommendedName>
        <fullName evidence="1">Large ribosomal subunit protein uL14</fullName>
    </recommendedName>
    <alternativeName>
        <fullName>60S ribosomal protein L23</fullName>
    </alternativeName>
</protein>
<gene>
    <name type="primary">RPL23</name>
</gene>
<comment type="similarity">
    <text evidence="1">Belongs to the universal ribosomal protein uL14 family.</text>
</comment>
<reference key="1">
    <citation type="journal article" date="1993" name="Trop. Med. Parasitol.">
        <title>The Onchocerca volvulus mRNAs for a hsp70, a collagen-like protein and a ribosomal protein possess a 5' spliced leader sequence.</title>
        <authorList>
            <person name="Henkle-Duhrsen K."/>
            <person name="Liebau E."/>
            <person name="Walter R.D."/>
        </authorList>
    </citation>
    <scope>NUCLEOTIDE SEQUENCE [MRNA]</scope>
</reference>
<sequence length="48" mass="4941">MSKRGRGGTSGAKFRISLGLPVGAVMNCADNTGAKNLFVIAVYGIKGR</sequence>
<dbReference type="EMBL" id="S70033">
    <property type="protein sequence ID" value="AAB30262.2"/>
    <property type="molecule type" value="mRNA"/>
</dbReference>
<dbReference type="SMR" id="P52816"/>
<dbReference type="STRING" id="6282.P52816"/>
<dbReference type="HOGENOM" id="CLU_095071_3_0_1"/>
<dbReference type="Proteomes" id="UP000024404">
    <property type="component" value="Unassembled WGS sequence"/>
</dbReference>
<dbReference type="GO" id="GO:0022625">
    <property type="term" value="C:cytosolic large ribosomal subunit"/>
    <property type="evidence" value="ECO:0007669"/>
    <property type="project" value="TreeGrafter"/>
</dbReference>
<dbReference type="GO" id="GO:0070180">
    <property type="term" value="F:large ribosomal subunit rRNA binding"/>
    <property type="evidence" value="ECO:0007669"/>
    <property type="project" value="TreeGrafter"/>
</dbReference>
<dbReference type="GO" id="GO:0003735">
    <property type="term" value="F:structural constituent of ribosome"/>
    <property type="evidence" value="ECO:0007669"/>
    <property type="project" value="InterPro"/>
</dbReference>
<dbReference type="GO" id="GO:0006412">
    <property type="term" value="P:translation"/>
    <property type="evidence" value="ECO:0007669"/>
    <property type="project" value="InterPro"/>
</dbReference>
<dbReference type="Gene3D" id="2.40.150.20">
    <property type="entry name" value="Ribosomal protein L14"/>
    <property type="match status" value="1"/>
</dbReference>
<dbReference type="InterPro" id="IPR000218">
    <property type="entry name" value="Ribosomal_uL14"/>
</dbReference>
<dbReference type="InterPro" id="IPR036853">
    <property type="entry name" value="Ribosomal_uL14_sf"/>
</dbReference>
<dbReference type="PANTHER" id="PTHR11761">
    <property type="entry name" value="50S/60S RIBOSOMAL PROTEIN L14/L23"/>
    <property type="match status" value="1"/>
</dbReference>
<dbReference type="PANTHER" id="PTHR11761:SF8">
    <property type="entry name" value="LARGE RIBOSOMAL SUBUNIT PROTEIN UL14"/>
    <property type="match status" value="1"/>
</dbReference>
<dbReference type="SUPFAM" id="SSF50193">
    <property type="entry name" value="Ribosomal protein L14"/>
    <property type="match status" value="1"/>
</dbReference>
<keyword id="KW-1185">Reference proteome</keyword>
<keyword id="KW-0687">Ribonucleoprotein</keyword>
<keyword id="KW-0689">Ribosomal protein</keyword>
<organism>
    <name type="scientific">Onchocerca volvulus</name>
    <dbReference type="NCBI Taxonomy" id="6282"/>
    <lineage>
        <taxon>Eukaryota</taxon>
        <taxon>Metazoa</taxon>
        <taxon>Ecdysozoa</taxon>
        <taxon>Nematoda</taxon>
        <taxon>Chromadorea</taxon>
        <taxon>Rhabditida</taxon>
        <taxon>Spirurina</taxon>
        <taxon>Spiruromorpha</taxon>
        <taxon>Filarioidea</taxon>
        <taxon>Onchocercidae</taxon>
        <taxon>Onchocerca</taxon>
    </lineage>
</organism>
<proteinExistence type="evidence at transcript level"/>
<feature type="chain" id="PRO_0000128621" description="Large ribosomal subunit protein uL14">
    <location>
        <begin position="1"/>
        <end position="48" status="greater than"/>
    </location>
</feature>
<feature type="non-terminal residue">
    <location>
        <position position="48"/>
    </location>
</feature>